<organism>
    <name type="scientific">Polaromonas sp. (strain JS666 / ATCC BAA-500)</name>
    <dbReference type="NCBI Taxonomy" id="296591"/>
    <lineage>
        <taxon>Bacteria</taxon>
        <taxon>Pseudomonadati</taxon>
        <taxon>Pseudomonadota</taxon>
        <taxon>Betaproteobacteria</taxon>
        <taxon>Burkholderiales</taxon>
        <taxon>Comamonadaceae</taxon>
        <taxon>Polaromonas</taxon>
    </lineage>
</organism>
<sequence>MLRRKLGLYLALIRWNRPAGWLLLLWPTLSALWVASHGFPGWHLLTVFTLGTILMRSAGCCVNDVADRDFDRHVKRTAQRPVTSGQVSVREALVLGAVLALLAFGLVLTTNAATIAWSFAALAVTLAYPFAKRYVSMPQAVLGVAFSFGIPMAFAAVQSRVPLLAWVLLLGNLCWVIAYDTEYAMVDRDDDLKIGMKTSAITLGRFDVAGVMLSYLVYLSVWALALADIPQAAIYWMAIGLAGLQALWHGWLIRKRERDDCFKAFRLNHWLGFTVFAGIALSYLAA</sequence>
<reference key="1">
    <citation type="journal article" date="2008" name="Appl. Environ. Microbiol.">
        <title>The genome of Polaromonas sp. strain JS666: insights into the evolution of a hydrocarbon- and xenobiotic-degrading bacterium, and features of relevance to biotechnology.</title>
        <authorList>
            <person name="Mattes T.E."/>
            <person name="Alexander A.K."/>
            <person name="Richardson P.M."/>
            <person name="Munk A.C."/>
            <person name="Han C.S."/>
            <person name="Stothard P."/>
            <person name="Coleman N.V."/>
        </authorList>
    </citation>
    <scope>NUCLEOTIDE SEQUENCE [LARGE SCALE GENOMIC DNA]</scope>
    <source>
        <strain>JS666 / ATCC BAA-500</strain>
    </source>
</reference>
<proteinExistence type="inferred from homology"/>
<name>UBIA_POLSJ</name>
<feature type="chain" id="PRO_0000262816" description="4-hydroxybenzoate octaprenyltransferase">
    <location>
        <begin position="1"/>
        <end position="286"/>
    </location>
</feature>
<feature type="transmembrane region" description="Helical" evidence="1">
    <location>
        <begin position="19"/>
        <end position="39"/>
    </location>
</feature>
<feature type="transmembrane region" description="Helical" evidence="1">
    <location>
        <begin position="42"/>
        <end position="62"/>
    </location>
</feature>
<feature type="transmembrane region" description="Helical" evidence="1">
    <location>
        <begin position="92"/>
        <end position="112"/>
    </location>
</feature>
<feature type="transmembrane region" description="Helical" evidence="1">
    <location>
        <begin position="115"/>
        <end position="135"/>
    </location>
</feature>
<feature type="transmembrane region" description="Helical" evidence="1">
    <location>
        <begin position="137"/>
        <end position="157"/>
    </location>
</feature>
<feature type="transmembrane region" description="Helical" evidence="1">
    <location>
        <begin position="161"/>
        <end position="181"/>
    </location>
</feature>
<feature type="transmembrane region" description="Helical" evidence="1">
    <location>
        <begin position="206"/>
        <end position="226"/>
    </location>
</feature>
<feature type="transmembrane region" description="Helical" evidence="1">
    <location>
        <begin position="233"/>
        <end position="253"/>
    </location>
</feature>
<feature type="transmembrane region" description="Helical" evidence="1">
    <location>
        <begin position="264"/>
        <end position="284"/>
    </location>
</feature>
<evidence type="ECO:0000255" key="1">
    <source>
        <dbReference type="HAMAP-Rule" id="MF_01635"/>
    </source>
</evidence>
<keyword id="KW-0997">Cell inner membrane</keyword>
<keyword id="KW-1003">Cell membrane</keyword>
<keyword id="KW-0460">Magnesium</keyword>
<keyword id="KW-0472">Membrane</keyword>
<keyword id="KW-1185">Reference proteome</keyword>
<keyword id="KW-0808">Transferase</keyword>
<keyword id="KW-0812">Transmembrane</keyword>
<keyword id="KW-1133">Transmembrane helix</keyword>
<keyword id="KW-0831">Ubiquinone biosynthesis</keyword>
<comment type="function">
    <text evidence="1">Catalyzes the prenylation of para-hydroxybenzoate (PHB) with an all-trans polyprenyl group. Mediates the second step in the final reaction sequence of ubiquinone-8 (UQ-8) biosynthesis, which is the condensation of the polyisoprenoid side chain with PHB, generating the first membrane-bound Q intermediate 3-octaprenyl-4-hydroxybenzoate.</text>
</comment>
<comment type="catalytic activity">
    <reaction evidence="1">
        <text>all-trans-octaprenyl diphosphate + 4-hydroxybenzoate = 4-hydroxy-3-(all-trans-octaprenyl)benzoate + diphosphate</text>
        <dbReference type="Rhea" id="RHEA:27782"/>
        <dbReference type="ChEBI" id="CHEBI:1617"/>
        <dbReference type="ChEBI" id="CHEBI:17879"/>
        <dbReference type="ChEBI" id="CHEBI:33019"/>
        <dbReference type="ChEBI" id="CHEBI:57711"/>
        <dbReference type="EC" id="2.5.1.39"/>
    </reaction>
</comment>
<comment type="cofactor">
    <cofactor evidence="1">
        <name>Mg(2+)</name>
        <dbReference type="ChEBI" id="CHEBI:18420"/>
    </cofactor>
</comment>
<comment type="pathway">
    <text evidence="1">Cofactor biosynthesis; ubiquinone biosynthesis.</text>
</comment>
<comment type="subcellular location">
    <subcellularLocation>
        <location evidence="1">Cell inner membrane</location>
        <topology evidence="1">Multi-pass membrane protein</topology>
    </subcellularLocation>
</comment>
<comment type="similarity">
    <text evidence="1">Belongs to the UbiA prenyltransferase family.</text>
</comment>
<gene>
    <name evidence="1" type="primary">ubiA</name>
    <name type="ordered locus">Bpro_0474</name>
</gene>
<dbReference type="EC" id="2.5.1.39" evidence="1"/>
<dbReference type="EMBL" id="CP000316">
    <property type="protein sequence ID" value="ABE42438.1"/>
    <property type="molecule type" value="Genomic_DNA"/>
</dbReference>
<dbReference type="RefSeq" id="WP_011481445.1">
    <property type="nucleotide sequence ID" value="NC_007948.1"/>
</dbReference>
<dbReference type="SMR" id="Q12GA4"/>
<dbReference type="STRING" id="296591.Bpro_0474"/>
<dbReference type="KEGG" id="pol:Bpro_0474"/>
<dbReference type="eggNOG" id="COG0382">
    <property type="taxonomic scope" value="Bacteria"/>
</dbReference>
<dbReference type="HOGENOM" id="CLU_034879_1_0_4"/>
<dbReference type="OrthoDB" id="9782418at2"/>
<dbReference type="UniPathway" id="UPA00232"/>
<dbReference type="Proteomes" id="UP000001983">
    <property type="component" value="Chromosome"/>
</dbReference>
<dbReference type="GO" id="GO:0005886">
    <property type="term" value="C:plasma membrane"/>
    <property type="evidence" value="ECO:0007669"/>
    <property type="project" value="UniProtKB-SubCell"/>
</dbReference>
<dbReference type="GO" id="GO:0008412">
    <property type="term" value="F:4-hydroxybenzoate polyprenyltransferase activity"/>
    <property type="evidence" value="ECO:0007669"/>
    <property type="project" value="UniProtKB-UniRule"/>
</dbReference>
<dbReference type="GO" id="GO:0006744">
    <property type="term" value="P:ubiquinone biosynthetic process"/>
    <property type="evidence" value="ECO:0007669"/>
    <property type="project" value="UniProtKB-UniRule"/>
</dbReference>
<dbReference type="CDD" id="cd13959">
    <property type="entry name" value="PT_UbiA_COQ2"/>
    <property type="match status" value="1"/>
</dbReference>
<dbReference type="FunFam" id="1.10.357.140:FF:000002">
    <property type="entry name" value="4-hydroxybenzoate octaprenyltransferase"/>
    <property type="match status" value="1"/>
</dbReference>
<dbReference type="FunFam" id="1.20.120.1780:FF:000001">
    <property type="entry name" value="4-hydroxybenzoate octaprenyltransferase"/>
    <property type="match status" value="1"/>
</dbReference>
<dbReference type="Gene3D" id="1.10.357.140">
    <property type="entry name" value="UbiA prenyltransferase"/>
    <property type="match status" value="1"/>
</dbReference>
<dbReference type="Gene3D" id="1.20.120.1780">
    <property type="entry name" value="UbiA prenyltransferase"/>
    <property type="match status" value="1"/>
</dbReference>
<dbReference type="HAMAP" id="MF_01635">
    <property type="entry name" value="UbiA"/>
    <property type="match status" value="1"/>
</dbReference>
<dbReference type="InterPro" id="IPR006370">
    <property type="entry name" value="HB_polyprenyltransferase-like"/>
</dbReference>
<dbReference type="InterPro" id="IPR039653">
    <property type="entry name" value="Prenyltransferase"/>
</dbReference>
<dbReference type="InterPro" id="IPR000537">
    <property type="entry name" value="UbiA_prenyltransferase"/>
</dbReference>
<dbReference type="InterPro" id="IPR030470">
    <property type="entry name" value="UbiA_prenylTrfase_CS"/>
</dbReference>
<dbReference type="InterPro" id="IPR044878">
    <property type="entry name" value="UbiA_sf"/>
</dbReference>
<dbReference type="NCBIfam" id="TIGR01474">
    <property type="entry name" value="ubiA_proteo"/>
    <property type="match status" value="1"/>
</dbReference>
<dbReference type="PANTHER" id="PTHR11048:SF28">
    <property type="entry name" value="4-HYDROXYBENZOATE POLYPRENYLTRANSFERASE, MITOCHONDRIAL"/>
    <property type="match status" value="1"/>
</dbReference>
<dbReference type="PANTHER" id="PTHR11048">
    <property type="entry name" value="PRENYLTRANSFERASES"/>
    <property type="match status" value="1"/>
</dbReference>
<dbReference type="Pfam" id="PF01040">
    <property type="entry name" value="UbiA"/>
    <property type="match status" value="1"/>
</dbReference>
<dbReference type="PROSITE" id="PS00943">
    <property type="entry name" value="UBIA"/>
    <property type="match status" value="1"/>
</dbReference>
<protein>
    <recommendedName>
        <fullName evidence="1">4-hydroxybenzoate octaprenyltransferase</fullName>
        <ecNumber evidence="1">2.5.1.39</ecNumber>
    </recommendedName>
    <alternativeName>
        <fullName evidence="1">4-HB polyprenyltransferase</fullName>
    </alternativeName>
</protein>
<accession>Q12GA4</accession>